<feature type="chain" id="PRO_1000011285" description="Probable endonuclease 4">
    <location>
        <begin position="1"/>
        <end position="281"/>
    </location>
</feature>
<feature type="binding site" evidence="1">
    <location>
        <position position="69"/>
    </location>
    <ligand>
        <name>Zn(2+)</name>
        <dbReference type="ChEBI" id="CHEBI:29105"/>
        <label>1</label>
    </ligand>
</feature>
<feature type="binding site" evidence="1">
    <location>
        <position position="109"/>
    </location>
    <ligand>
        <name>Zn(2+)</name>
        <dbReference type="ChEBI" id="CHEBI:29105"/>
        <label>1</label>
    </ligand>
</feature>
<feature type="binding site" evidence="1">
    <location>
        <position position="145"/>
    </location>
    <ligand>
        <name>Zn(2+)</name>
        <dbReference type="ChEBI" id="CHEBI:29105"/>
        <label>1</label>
    </ligand>
</feature>
<feature type="binding site" evidence="1">
    <location>
        <position position="145"/>
    </location>
    <ligand>
        <name>Zn(2+)</name>
        <dbReference type="ChEBI" id="CHEBI:29105"/>
        <label>2</label>
    </ligand>
</feature>
<feature type="binding site" evidence="1">
    <location>
        <position position="179"/>
    </location>
    <ligand>
        <name>Zn(2+)</name>
        <dbReference type="ChEBI" id="CHEBI:29105"/>
        <label>2</label>
    </ligand>
</feature>
<feature type="binding site" evidence="1">
    <location>
        <position position="182"/>
    </location>
    <ligand>
        <name>Zn(2+)</name>
        <dbReference type="ChEBI" id="CHEBI:29105"/>
        <label>3</label>
    </ligand>
</feature>
<feature type="binding site" evidence="1">
    <location>
        <position position="216"/>
    </location>
    <ligand>
        <name>Zn(2+)</name>
        <dbReference type="ChEBI" id="CHEBI:29105"/>
        <label>2</label>
    </ligand>
</feature>
<feature type="binding site" evidence="1">
    <location>
        <position position="229"/>
    </location>
    <ligand>
        <name>Zn(2+)</name>
        <dbReference type="ChEBI" id="CHEBI:29105"/>
        <label>3</label>
    </ligand>
</feature>
<feature type="binding site" evidence="1">
    <location>
        <position position="231"/>
    </location>
    <ligand>
        <name>Zn(2+)</name>
        <dbReference type="ChEBI" id="CHEBI:29105"/>
        <label>3</label>
    </ligand>
</feature>
<feature type="binding site" evidence="1">
    <location>
        <position position="261"/>
    </location>
    <ligand>
        <name>Zn(2+)</name>
        <dbReference type="ChEBI" id="CHEBI:29105"/>
        <label>2</label>
    </ligand>
</feature>
<organism>
    <name type="scientific">Aeromonas hydrophila subsp. hydrophila (strain ATCC 7966 / DSM 30187 / BCRC 13018 / CCUG 14551 / JCM 1027 / KCTC 2358 / NCIMB 9240 / NCTC 8049)</name>
    <dbReference type="NCBI Taxonomy" id="380703"/>
    <lineage>
        <taxon>Bacteria</taxon>
        <taxon>Pseudomonadati</taxon>
        <taxon>Pseudomonadota</taxon>
        <taxon>Gammaproteobacteria</taxon>
        <taxon>Aeromonadales</taxon>
        <taxon>Aeromonadaceae</taxon>
        <taxon>Aeromonas</taxon>
    </lineage>
</organism>
<sequence length="281" mass="30865">MKFIGAHVSAAGGVENTIARAQAIGANAFALFTKNQRQWQAAPLSEASIHAFKLACEKGGFRPEQILPHDSYLINLGHPDPDGLAKSRDAFLDEMKRCEQLGLCYLNFHPGSHLKQIPEAASLKLVSESINWALERSQGVTAVIENTAGQGTNLGWSFEHLATIIDGVEDKSRVGICFDTCHAFAAGYDLRTADACAAVFAEFEQTVGFQYLKGMHINGAKCTFGSRVDRHHSLREGNLGEAVFHHIMNDDRFDGIPLILETIDESIWGDEIRWLRSLAKA</sequence>
<reference key="1">
    <citation type="journal article" date="2006" name="J. Bacteriol.">
        <title>Genome sequence of Aeromonas hydrophila ATCC 7966T: jack of all trades.</title>
        <authorList>
            <person name="Seshadri R."/>
            <person name="Joseph S.W."/>
            <person name="Chopra A.K."/>
            <person name="Sha J."/>
            <person name="Shaw J."/>
            <person name="Graf J."/>
            <person name="Haft D.H."/>
            <person name="Wu M."/>
            <person name="Ren Q."/>
            <person name="Rosovitz M.J."/>
            <person name="Madupu R."/>
            <person name="Tallon L."/>
            <person name="Kim M."/>
            <person name="Jin S."/>
            <person name="Vuong H."/>
            <person name="Stine O.C."/>
            <person name="Ali A."/>
            <person name="Horneman A.J."/>
            <person name="Heidelberg J.F."/>
        </authorList>
    </citation>
    <scope>NUCLEOTIDE SEQUENCE [LARGE SCALE GENOMIC DNA]</scope>
    <source>
        <strain>ATCC 7966 / DSM 30187 / BCRC 13018 / CCUG 14551 / JCM 1027 / KCTC 2358 / NCIMB 9240 / NCTC 8049</strain>
    </source>
</reference>
<keyword id="KW-0227">DNA damage</keyword>
<keyword id="KW-0234">DNA repair</keyword>
<keyword id="KW-0255">Endonuclease</keyword>
<keyword id="KW-0378">Hydrolase</keyword>
<keyword id="KW-0479">Metal-binding</keyword>
<keyword id="KW-0540">Nuclease</keyword>
<keyword id="KW-1185">Reference proteome</keyword>
<keyword id="KW-0862">Zinc</keyword>
<proteinExistence type="inferred from homology"/>
<accession>A0KK26</accession>
<protein>
    <recommendedName>
        <fullName evidence="1">Probable endonuclease 4</fullName>
        <ecNumber evidence="1">3.1.21.2</ecNumber>
    </recommendedName>
    <alternativeName>
        <fullName evidence="1">Endodeoxyribonuclease IV</fullName>
    </alternativeName>
    <alternativeName>
        <fullName evidence="1">Endonuclease IV</fullName>
    </alternativeName>
</protein>
<gene>
    <name evidence="1" type="primary">nfo</name>
    <name type="ordered locus">AHA_2097</name>
</gene>
<evidence type="ECO:0000255" key="1">
    <source>
        <dbReference type="HAMAP-Rule" id="MF_00152"/>
    </source>
</evidence>
<dbReference type="EC" id="3.1.21.2" evidence="1"/>
<dbReference type="EMBL" id="CP000462">
    <property type="protein sequence ID" value="ABK37567.1"/>
    <property type="molecule type" value="Genomic_DNA"/>
</dbReference>
<dbReference type="RefSeq" id="WP_011705964.1">
    <property type="nucleotide sequence ID" value="NC_008570.1"/>
</dbReference>
<dbReference type="RefSeq" id="YP_856627.1">
    <property type="nucleotide sequence ID" value="NC_008570.1"/>
</dbReference>
<dbReference type="SMR" id="A0KK26"/>
<dbReference type="STRING" id="380703.AHA_2097"/>
<dbReference type="EnsemblBacteria" id="ABK37567">
    <property type="protein sequence ID" value="ABK37567"/>
    <property type="gene ID" value="AHA_2097"/>
</dbReference>
<dbReference type="GeneID" id="4487656"/>
<dbReference type="KEGG" id="aha:AHA_2097"/>
<dbReference type="PATRIC" id="fig|380703.7.peg.2105"/>
<dbReference type="eggNOG" id="COG0648">
    <property type="taxonomic scope" value="Bacteria"/>
</dbReference>
<dbReference type="HOGENOM" id="CLU_025885_0_4_6"/>
<dbReference type="OrthoDB" id="9805666at2"/>
<dbReference type="Proteomes" id="UP000000756">
    <property type="component" value="Chromosome"/>
</dbReference>
<dbReference type="GO" id="GO:0008833">
    <property type="term" value="F:deoxyribonuclease IV (phage-T4-induced) activity"/>
    <property type="evidence" value="ECO:0007669"/>
    <property type="project" value="UniProtKB-UniRule"/>
</dbReference>
<dbReference type="GO" id="GO:0003677">
    <property type="term" value="F:DNA binding"/>
    <property type="evidence" value="ECO:0007669"/>
    <property type="project" value="InterPro"/>
</dbReference>
<dbReference type="GO" id="GO:0003906">
    <property type="term" value="F:DNA-(apurinic or apyrimidinic site) endonuclease activity"/>
    <property type="evidence" value="ECO:0007669"/>
    <property type="project" value="TreeGrafter"/>
</dbReference>
<dbReference type="GO" id="GO:0008081">
    <property type="term" value="F:phosphoric diester hydrolase activity"/>
    <property type="evidence" value="ECO:0007669"/>
    <property type="project" value="TreeGrafter"/>
</dbReference>
<dbReference type="GO" id="GO:0008270">
    <property type="term" value="F:zinc ion binding"/>
    <property type="evidence" value="ECO:0007669"/>
    <property type="project" value="UniProtKB-UniRule"/>
</dbReference>
<dbReference type="GO" id="GO:0006284">
    <property type="term" value="P:base-excision repair"/>
    <property type="evidence" value="ECO:0007669"/>
    <property type="project" value="TreeGrafter"/>
</dbReference>
<dbReference type="CDD" id="cd00019">
    <property type="entry name" value="AP2Ec"/>
    <property type="match status" value="1"/>
</dbReference>
<dbReference type="FunFam" id="3.20.20.150:FF:000001">
    <property type="entry name" value="Probable endonuclease 4"/>
    <property type="match status" value="1"/>
</dbReference>
<dbReference type="Gene3D" id="3.20.20.150">
    <property type="entry name" value="Divalent-metal-dependent TIM barrel enzymes"/>
    <property type="match status" value="1"/>
</dbReference>
<dbReference type="HAMAP" id="MF_00152">
    <property type="entry name" value="Nfo"/>
    <property type="match status" value="1"/>
</dbReference>
<dbReference type="InterPro" id="IPR001719">
    <property type="entry name" value="AP_endonuc_2"/>
</dbReference>
<dbReference type="InterPro" id="IPR018246">
    <property type="entry name" value="AP_endonuc_F2_Zn_BS"/>
</dbReference>
<dbReference type="InterPro" id="IPR036237">
    <property type="entry name" value="Xyl_isomerase-like_sf"/>
</dbReference>
<dbReference type="InterPro" id="IPR013022">
    <property type="entry name" value="Xyl_isomerase-like_TIM-brl"/>
</dbReference>
<dbReference type="NCBIfam" id="TIGR00587">
    <property type="entry name" value="nfo"/>
    <property type="match status" value="1"/>
</dbReference>
<dbReference type="NCBIfam" id="NF002199">
    <property type="entry name" value="PRK01060.1-4"/>
    <property type="match status" value="1"/>
</dbReference>
<dbReference type="PANTHER" id="PTHR21445:SF0">
    <property type="entry name" value="APURINIC-APYRIMIDINIC ENDONUCLEASE"/>
    <property type="match status" value="1"/>
</dbReference>
<dbReference type="PANTHER" id="PTHR21445">
    <property type="entry name" value="ENDONUCLEASE IV ENDODEOXYRIBONUCLEASE IV"/>
    <property type="match status" value="1"/>
</dbReference>
<dbReference type="Pfam" id="PF01261">
    <property type="entry name" value="AP_endonuc_2"/>
    <property type="match status" value="1"/>
</dbReference>
<dbReference type="SMART" id="SM00518">
    <property type="entry name" value="AP2Ec"/>
    <property type="match status" value="1"/>
</dbReference>
<dbReference type="SUPFAM" id="SSF51658">
    <property type="entry name" value="Xylose isomerase-like"/>
    <property type="match status" value="1"/>
</dbReference>
<dbReference type="PROSITE" id="PS00729">
    <property type="entry name" value="AP_NUCLEASE_F2_1"/>
    <property type="match status" value="1"/>
</dbReference>
<dbReference type="PROSITE" id="PS00730">
    <property type="entry name" value="AP_NUCLEASE_F2_2"/>
    <property type="match status" value="1"/>
</dbReference>
<dbReference type="PROSITE" id="PS00731">
    <property type="entry name" value="AP_NUCLEASE_F2_3"/>
    <property type="match status" value="1"/>
</dbReference>
<dbReference type="PROSITE" id="PS51432">
    <property type="entry name" value="AP_NUCLEASE_F2_4"/>
    <property type="match status" value="1"/>
</dbReference>
<comment type="function">
    <text evidence="1">Endonuclease IV plays a role in DNA repair. It cleaves phosphodiester bonds at apurinic or apyrimidinic (AP) sites, generating a 3'-hydroxyl group and a 5'-terminal sugar phosphate.</text>
</comment>
<comment type="catalytic activity">
    <reaction evidence="1">
        <text>Endonucleolytic cleavage to 5'-phosphooligonucleotide end-products.</text>
        <dbReference type="EC" id="3.1.21.2"/>
    </reaction>
</comment>
<comment type="cofactor">
    <cofactor evidence="1">
        <name>Zn(2+)</name>
        <dbReference type="ChEBI" id="CHEBI:29105"/>
    </cofactor>
    <text evidence="1">Binds 3 Zn(2+) ions.</text>
</comment>
<comment type="similarity">
    <text evidence="1">Belongs to the AP endonuclease 2 family.</text>
</comment>
<name>END4_AERHH</name>